<sequence>MTLTDSDKAAIVALWGKIAPQASAIGAEALERLFLSYPQTKTYFSHFDVSHGSADLSNHGGKVVNALGEAAKHIDDLDSALSTLSDLHAYNLRIDPGNFKLLSHTIQVTLAIHFHKEFDAATQAAWDKFLAEVATVLTSKYR</sequence>
<comment type="function">
    <text>This is a larval (tadpole) alpha-globin.</text>
</comment>
<comment type="subunit">
    <text>Heterotetramer of two alpha chains and two beta chains.</text>
</comment>
<comment type="tissue specificity">
    <text>Red blood cells.</text>
</comment>
<comment type="polymorphism">
    <text evidence="2">Alpha T4 may be an allele of alpha T3.</text>
</comment>
<comment type="similarity">
    <text evidence="1">Belongs to the globin family.</text>
</comment>
<proteinExistence type="evidence at transcript level"/>
<gene>
    <name type="primary">hba4</name>
</gene>
<reference key="1">
    <citation type="journal article" date="1985" name="Nucleic Acids Res.">
        <title>The pattern of expression of the Xenopus laevis tadpole alpha-globin genes and the amino acid sequence of the three major tadpole alpha-globin polypeptides.</title>
        <authorList>
            <person name="Banville D."/>
            <person name="Williams J.G."/>
        </authorList>
    </citation>
    <scope>NUCLEOTIDE SEQUENCE [MRNA]</scope>
</reference>
<reference key="2">
    <citation type="submission" date="2003-06" db="EMBL/GenBank/DDBJ databases">
        <authorList>
            <consortium name="NIH - Xenopus Gene Collection (XGC) project"/>
        </authorList>
    </citation>
    <scope>NUCLEOTIDE SEQUENCE [LARGE SCALE MRNA]</scope>
</reference>
<keyword id="KW-0349">Heme</keyword>
<keyword id="KW-0408">Iron</keyword>
<keyword id="KW-0479">Metal-binding</keyword>
<keyword id="KW-0561">Oxygen transport</keyword>
<keyword id="KW-1185">Reference proteome</keyword>
<keyword id="KW-0813">Transport</keyword>
<dbReference type="EMBL" id="X02797">
    <property type="protein sequence ID" value="CAA26565.1"/>
    <property type="molecule type" value="mRNA"/>
</dbReference>
<dbReference type="EMBL" id="BC053833">
    <property type="protein sequence ID" value="AAH53833.1"/>
    <property type="molecule type" value="mRNA"/>
</dbReference>
<dbReference type="PIR" id="B24338">
    <property type="entry name" value="B24338"/>
</dbReference>
<dbReference type="RefSeq" id="NP_001079749.1">
    <property type="nucleotide sequence ID" value="NM_001086280.2"/>
</dbReference>
<dbReference type="SMR" id="P06637"/>
<dbReference type="DNASU" id="379438"/>
<dbReference type="GeneID" id="379438"/>
<dbReference type="KEGG" id="xla:379438"/>
<dbReference type="AGR" id="Xenbase:XB-GENE-6255815"/>
<dbReference type="CTD" id="379438"/>
<dbReference type="Xenbase" id="XB-GENE-6255815">
    <property type="gene designation" value="hba4.S"/>
</dbReference>
<dbReference type="OMA" id="MFTSFPT"/>
<dbReference type="OrthoDB" id="8751793at2759"/>
<dbReference type="Proteomes" id="UP000186698">
    <property type="component" value="Chromosome 9_10S"/>
</dbReference>
<dbReference type="Bgee" id="379438">
    <property type="expression patterns" value="Expressed in internal ear and 6 other cell types or tissues"/>
</dbReference>
<dbReference type="GO" id="GO:0072562">
    <property type="term" value="C:blood microparticle"/>
    <property type="evidence" value="ECO:0007669"/>
    <property type="project" value="TreeGrafter"/>
</dbReference>
<dbReference type="GO" id="GO:0031838">
    <property type="term" value="C:haptoglobin-hemoglobin complex"/>
    <property type="evidence" value="ECO:0000318"/>
    <property type="project" value="GO_Central"/>
</dbReference>
<dbReference type="GO" id="GO:0005833">
    <property type="term" value="C:hemoglobin complex"/>
    <property type="evidence" value="ECO:0000318"/>
    <property type="project" value="GO_Central"/>
</dbReference>
<dbReference type="GO" id="GO:0031720">
    <property type="term" value="F:haptoglobin binding"/>
    <property type="evidence" value="ECO:0007669"/>
    <property type="project" value="TreeGrafter"/>
</dbReference>
<dbReference type="GO" id="GO:0020037">
    <property type="term" value="F:heme binding"/>
    <property type="evidence" value="ECO:0000318"/>
    <property type="project" value="GO_Central"/>
</dbReference>
<dbReference type="GO" id="GO:0005506">
    <property type="term" value="F:iron ion binding"/>
    <property type="evidence" value="ECO:0007669"/>
    <property type="project" value="InterPro"/>
</dbReference>
<dbReference type="GO" id="GO:0043177">
    <property type="term" value="F:organic acid binding"/>
    <property type="evidence" value="ECO:0007669"/>
    <property type="project" value="TreeGrafter"/>
</dbReference>
<dbReference type="GO" id="GO:0019825">
    <property type="term" value="F:oxygen binding"/>
    <property type="evidence" value="ECO:0000318"/>
    <property type="project" value="GO_Central"/>
</dbReference>
<dbReference type="GO" id="GO:0005344">
    <property type="term" value="F:oxygen carrier activity"/>
    <property type="evidence" value="ECO:0000318"/>
    <property type="project" value="GO_Central"/>
</dbReference>
<dbReference type="GO" id="GO:0004601">
    <property type="term" value="F:peroxidase activity"/>
    <property type="evidence" value="ECO:0007669"/>
    <property type="project" value="TreeGrafter"/>
</dbReference>
<dbReference type="GO" id="GO:0042744">
    <property type="term" value="P:hydrogen peroxide catabolic process"/>
    <property type="evidence" value="ECO:0000318"/>
    <property type="project" value="GO_Central"/>
</dbReference>
<dbReference type="CDD" id="cd08927">
    <property type="entry name" value="Hb-alpha-like"/>
    <property type="match status" value="1"/>
</dbReference>
<dbReference type="FunFam" id="1.10.490.10:FF:000002">
    <property type="entry name" value="Hemoglobin subunit alpha"/>
    <property type="match status" value="1"/>
</dbReference>
<dbReference type="Gene3D" id="1.10.490.10">
    <property type="entry name" value="Globins"/>
    <property type="match status" value="1"/>
</dbReference>
<dbReference type="InterPro" id="IPR000971">
    <property type="entry name" value="Globin"/>
</dbReference>
<dbReference type="InterPro" id="IPR009050">
    <property type="entry name" value="Globin-like_sf"/>
</dbReference>
<dbReference type="InterPro" id="IPR012292">
    <property type="entry name" value="Globin/Proto"/>
</dbReference>
<dbReference type="InterPro" id="IPR002338">
    <property type="entry name" value="Hemoglobin_a-typ"/>
</dbReference>
<dbReference type="InterPro" id="IPR050056">
    <property type="entry name" value="Hemoglobin_oxygen_transport"/>
</dbReference>
<dbReference type="InterPro" id="IPR002339">
    <property type="entry name" value="Hemoglobin_pi"/>
</dbReference>
<dbReference type="PANTHER" id="PTHR11442">
    <property type="entry name" value="HEMOGLOBIN FAMILY MEMBER"/>
    <property type="match status" value="1"/>
</dbReference>
<dbReference type="PANTHER" id="PTHR11442:SF8">
    <property type="entry name" value="HEMOGLOBIN SUBUNIT MU"/>
    <property type="match status" value="1"/>
</dbReference>
<dbReference type="Pfam" id="PF00042">
    <property type="entry name" value="Globin"/>
    <property type="match status" value="1"/>
</dbReference>
<dbReference type="PRINTS" id="PR00612">
    <property type="entry name" value="ALPHAHAEM"/>
</dbReference>
<dbReference type="PRINTS" id="PR00815">
    <property type="entry name" value="PIHAEM"/>
</dbReference>
<dbReference type="SUPFAM" id="SSF46458">
    <property type="entry name" value="Globin-like"/>
    <property type="match status" value="1"/>
</dbReference>
<dbReference type="PROSITE" id="PS01033">
    <property type="entry name" value="GLOBIN"/>
    <property type="match status" value="1"/>
</dbReference>
<name>HBA4_XENLA</name>
<organism>
    <name type="scientific">Xenopus laevis</name>
    <name type="common">African clawed frog</name>
    <dbReference type="NCBI Taxonomy" id="8355"/>
    <lineage>
        <taxon>Eukaryota</taxon>
        <taxon>Metazoa</taxon>
        <taxon>Chordata</taxon>
        <taxon>Craniata</taxon>
        <taxon>Vertebrata</taxon>
        <taxon>Euteleostomi</taxon>
        <taxon>Amphibia</taxon>
        <taxon>Batrachia</taxon>
        <taxon>Anura</taxon>
        <taxon>Pipoidea</taxon>
        <taxon>Pipidae</taxon>
        <taxon>Xenopodinae</taxon>
        <taxon>Xenopus</taxon>
        <taxon>Xenopus</taxon>
    </lineage>
</organism>
<evidence type="ECO:0000255" key="1">
    <source>
        <dbReference type="PROSITE-ProRule" id="PRU00238"/>
    </source>
</evidence>
<evidence type="ECO:0000305" key="2">
    <source>
    </source>
</evidence>
<protein>
    <recommendedName>
        <fullName>Hemoglobin subunit alpha-4</fullName>
    </recommendedName>
    <alternativeName>
        <fullName>Alpha-4-globin</fullName>
    </alternativeName>
    <alternativeName>
        <fullName>Alpha-T4</fullName>
    </alternativeName>
    <alternativeName>
        <fullName>Hemoglobin alpha-4 chain</fullName>
    </alternativeName>
</protein>
<feature type="initiator methionine" description="Removed">
    <location>
        <position position="1"/>
    </location>
</feature>
<feature type="chain" id="PRO_0000052810" description="Hemoglobin subunit alpha-4">
    <location>
        <begin position="2"/>
        <end position="142"/>
    </location>
</feature>
<feature type="domain" description="Globin" evidence="1">
    <location>
        <begin position="2"/>
        <end position="142"/>
    </location>
</feature>
<feature type="binding site" evidence="1">
    <location>
        <position position="59"/>
    </location>
    <ligand>
        <name>O2</name>
        <dbReference type="ChEBI" id="CHEBI:15379"/>
    </ligand>
</feature>
<feature type="binding site" description="proximal binding residue" evidence="1">
    <location>
        <position position="88"/>
    </location>
    <ligand>
        <name>heme b</name>
        <dbReference type="ChEBI" id="CHEBI:60344"/>
    </ligand>
    <ligandPart>
        <name>Fe</name>
        <dbReference type="ChEBI" id="CHEBI:18248"/>
    </ligandPart>
</feature>
<accession>P06637</accession>
<accession>Q5D089</accession>